<proteinExistence type="inferred from homology"/>
<accession>Q7TUA3</accession>
<reference key="1">
    <citation type="journal article" date="2003" name="Nature">
        <title>Genome divergence in two Prochlorococcus ecotypes reflects oceanic niche differentiation.</title>
        <authorList>
            <person name="Rocap G."/>
            <person name="Larimer F.W."/>
            <person name="Lamerdin J.E."/>
            <person name="Malfatti S."/>
            <person name="Chain P."/>
            <person name="Ahlgren N.A."/>
            <person name="Arellano A."/>
            <person name="Coleman M."/>
            <person name="Hauser L."/>
            <person name="Hess W.R."/>
            <person name="Johnson Z.I."/>
            <person name="Land M.L."/>
            <person name="Lindell D."/>
            <person name="Post A.F."/>
            <person name="Regala W."/>
            <person name="Shah M."/>
            <person name="Shaw S.L."/>
            <person name="Steglich C."/>
            <person name="Sullivan M.B."/>
            <person name="Ting C.S."/>
            <person name="Tolonen A."/>
            <person name="Webb E.A."/>
            <person name="Zinser E.R."/>
            <person name="Chisholm S.W."/>
        </authorList>
    </citation>
    <scope>NUCLEOTIDE SEQUENCE [LARGE SCALE GENOMIC DNA]</scope>
    <source>
        <strain>CCMP1986 / NIES-2087 / MED4</strain>
    </source>
</reference>
<keyword id="KW-0648">Protein biosynthesis</keyword>
<keyword id="KW-0808">Transferase</keyword>
<gene>
    <name evidence="1" type="primary">fmt</name>
    <name type="ordered locus">PMM0841</name>
</gene>
<dbReference type="EC" id="2.1.2.9" evidence="1"/>
<dbReference type="EMBL" id="BX548174">
    <property type="protein sequence ID" value="CAE19300.1"/>
    <property type="molecule type" value="Genomic_DNA"/>
</dbReference>
<dbReference type="RefSeq" id="WP_011132475.1">
    <property type="nucleotide sequence ID" value="NC_005072.1"/>
</dbReference>
<dbReference type="SMR" id="Q7TUA3"/>
<dbReference type="STRING" id="59919.PMM0841"/>
<dbReference type="KEGG" id="pmm:PMM0841"/>
<dbReference type="eggNOG" id="COG0223">
    <property type="taxonomic scope" value="Bacteria"/>
</dbReference>
<dbReference type="HOGENOM" id="CLU_033347_1_1_3"/>
<dbReference type="OrthoDB" id="9802815at2"/>
<dbReference type="Proteomes" id="UP000001026">
    <property type="component" value="Chromosome"/>
</dbReference>
<dbReference type="GO" id="GO:0005829">
    <property type="term" value="C:cytosol"/>
    <property type="evidence" value="ECO:0007669"/>
    <property type="project" value="TreeGrafter"/>
</dbReference>
<dbReference type="GO" id="GO:0004479">
    <property type="term" value="F:methionyl-tRNA formyltransferase activity"/>
    <property type="evidence" value="ECO:0007669"/>
    <property type="project" value="UniProtKB-UniRule"/>
</dbReference>
<dbReference type="CDD" id="cd08646">
    <property type="entry name" value="FMT_core_Met-tRNA-FMT_N"/>
    <property type="match status" value="1"/>
</dbReference>
<dbReference type="CDD" id="cd08704">
    <property type="entry name" value="Met_tRNA_FMT_C"/>
    <property type="match status" value="1"/>
</dbReference>
<dbReference type="Gene3D" id="3.40.50.12230">
    <property type="match status" value="1"/>
</dbReference>
<dbReference type="HAMAP" id="MF_00182">
    <property type="entry name" value="Formyl_trans"/>
    <property type="match status" value="1"/>
</dbReference>
<dbReference type="InterPro" id="IPR005794">
    <property type="entry name" value="Fmt"/>
</dbReference>
<dbReference type="InterPro" id="IPR005793">
    <property type="entry name" value="Formyl_trans_C"/>
</dbReference>
<dbReference type="InterPro" id="IPR002376">
    <property type="entry name" value="Formyl_transf_N"/>
</dbReference>
<dbReference type="InterPro" id="IPR036477">
    <property type="entry name" value="Formyl_transf_N_sf"/>
</dbReference>
<dbReference type="InterPro" id="IPR011034">
    <property type="entry name" value="Formyl_transferase-like_C_sf"/>
</dbReference>
<dbReference type="InterPro" id="IPR044135">
    <property type="entry name" value="Met-tRNA-FMT_C"/>
</dbReference>
<dbReference type="InterPro" id="IPR041711">
    <property type="entry name" value="Met-tRNA-FMT_N"/>
</dbReference>
<dbReference type="NCBIfam" id="TIGR00460">
    <property type="entry name" value="fmt"/>
    <property type="match status" value="1"/>
</dbReference>
<dbReference type="PANTHER" id="PTHR11138">
    <property type="entry name" value="METHIONYL-TRNA FORMYLTRANSFERASE"/>
    <property type="match status" value="1"/>
</dbReference>
<dbReference type="PANTHER" id="PTHR11138:SF5">
    <property type="entry name" value="METHIONYL-TRNA FORMYLTRANSFERASE, MITOCHONDRIAL"/>
    <property type="match status" value="1"/>
</dbReference>
<dbReference type="Pfam" id="PF02911">
    <property type="entry name" value="Formyl_trans_C"/>
    <property type="match status" value="1"/>
</dbReference>
<dbReference type="Pfam" id="PF00551">
    <property type="entry name" value="Formyl_trans_N"/>
    <property type="match status" value="1"/>
</dbReference>
<dbReference type="SUPFAM" id="SSF50486">
    <property type="entry name" value="FMT C-terminal domain-like"/>
    <property type="match status" value="1"/>
</dbReference>
<dbReference type="SUPFAM" id="SSF53328">
    <property type="entry name" value="Formyltransferase"/>
    <property type="match status" value="1"/>
</dbReference>
<protein>
    <recommendedName>
        <fullName evidence="1">Methionyl-tRNA formyltransferase</fullName>
        <ecNumber evidence="1">2.1.2.9</ecNumber>
    </recommendedName>
</protein>
<sequence length="328" mass="37567">MRIIFWGTPEYSVKSLEVLKKSDHDIVAVITQPDKKRSRGNKLISSPVKEYATKENIPVFTPETIKENIQFISILNDLSCDLFIVIAYGKILPKAILDIPKYKSWNAHASLLPRWRGAAPIQWSILEGDKITGVGIMRMEEGLDTGDVLVEKQIKIENNDNLKTLTKKLSDLSSELFLRAISDIEQNKNRDINLLLKKQTDFKRELKYARMINKLDYIINWENSATDIYRKINALYPRANTTYKRKNLKIIKIKILTTHEIHNKNYKILSNVFKPGLIIGLIKNVGIIITTKTDPILLLEAKLEGKKVSSQNQLIQQLNPVIGENFSD</sequence>
<comment type="function">
    <text evidence="1">Attaches a formyl group to the free amino group of methionyl-tRNA(fMet). The formyl group appears to play a dual role in the initiator identity of N-formylmethionyl-tRNA by promoting its recognition by IF2 and preventing the misappropriation of this tRNA by the elongation apparatus.</text>
</comment>
<comment type="catalytic activity">
    <reaction evidence="1">
        <text>L-methionyl-tRNA(fMet) + (6R)-10-formyltetrahydrofolate = N-formyl-L-methionyl-tRNA(fMet) + (6S)-5,6,7,8-tetrahydrofolate + H(+)</text>
        <dbReference type="Rhea" id="RHEA:24380"/>
        <dbReference type="Rhea" id="RHEA-COMP:9952"/>
        <dbReference type="Rhea" id="RHEA-COMP:9953"/>
        <dbReference type="ChEBI" id="CHEBI:15378"/>
        <dbReference type="ChEBI" id="CHEBI:57453"/>
        <dbReference type="ChEBI" id="CHEBI:78530"/>
        <dbReference type="ChEBI" id="CHEBI:78844"/>
        <dbReference type="ChEBI" id="CHEBI:195366"/>
        <dbReference type="EC" id="2.1.2.9"/>
    </reaction>
</comment>
<comment type="similarity">
    <text evidence="1">Belongs to the Fmt family.</text>
</comment>
<feature type="chain" id="PRO_0000083016" description="Methionyl-tRNA formyltransferase">
    <location>
        <begin position="1"/>
        <end position="328"/>
    </location>
</feature>
<feature type="binding site" evidence="1">
    <location>
        <begin position="110"/>
        <end position="113"/>
    </location>
    <ligand>
        <name>(6S)-5,6,7,8-tetrahydrofolate</name>
        <dbReference type="ChEBI" id="CHEBI:57453"/>
    </ligand>
</feature>
<name>FMT_PROMP</name>
<organism>
    <name type="scientific">Prochlorococcus marinus subsp. pastoris (strain CCMP1986 / NIES-2087 / MED4)</name>
    <dbReference type="NCBI Taxonomy" id="59919"/>
    <lineage>
        <taxon>Bacteria</taxon>
        <taxon>Bacillati</taxon>
        <taxon>Cyanobacteriota</taxon>
        <taxon>Cyanophyceae</taxon>
        <taxon>Synechococcales</taxon>
        <taxon>Prochlorococcaceae</taxon>
        <taxon>Prochlorococcus</taxon>
    </lineage>
</organism>
<evidence type="ECO:0000255" key="1">
    <source>
        <dbReference type="HAMAP-Rule" id="MF_00182"/>
    </source>
</evidence>